<protein>
    <recommendedName>
        <fullName evidence="1">Large ribosomal subunit protein bL32</fullName>
    </recommendedName>
    <alternativeName>
        <fullName evidence="3">50S ribosomal protein L32</fullName>
    </alternativeName>
</protein>
<proteinExistence type="inferred from homology"/>
<name>RL32_BRASO</name>
<keyword id="KW-1185">Reference proteome</keyword>
<keyword id="KW-0687">Ribonucleoprotein</keyword>
<keyword id="KW-0689">Ribosomal protein</keyword>
<organism>
    <name type="scientific">Bradyrhizobium sp. (strain ORS 278)</name>
    <dbReference type="NCBI Taxonomy" id="114615"/>
    <lineage>
        <taxon>Bacteria</taxon>
        <taxon>Pseudomonadati</taxon>
        <taxon>Pseudomonadota</taxon>
        <taxon>Alphaproteobacteria</taxon>
        <taxon>Hyphomicrobiales</taxon>
        <taxon>Nitrobacteraceae</taxon>
        <taxon>Bradyrhizobium</taxon>
    </lineage>
</organism>
<dbReference type="EMBL" id="CU234118">
    <property type="protein sequence ID" value="CAL74494.1"/>
    <property type="molecule type" value="Genomic_DNA"/>
</dbReference>
<dbReference type="RefSeq" id="WP_006610266.1">
    <property type="nucleotide sequence ID" value="NC_009445.1"/>
</dbReference>
<dbReference type="SMR" id="A4YKR8"/>
<dbReference type="STRING" id="114615.BRADO0557"/>
<dbReference type="KEGG" id="bra:BRADO0557"/>
<dbReference type="eggNOG" id="COG0333">
    <property type="taxonomic scope" value="Bacteria"/>
</dbReference>
<dbReference type="HOGENOM" id="CLU_129084_2_2_5"/>
<dbReference type="OrthoDB" id="9801927at2"/>
<dbReference type="Proteomes" id="UP000001994">
    <property type="component" value="Chromosome"/>
</dbReference>
<dbReference type="GO" id="GO:0015934">
    <property type="term" value="C:large ribosomal subunit"/>
    <property type="evidence" value="ECO:0007669"/>
    <property type="project" value="InterPro"/>
</dbReference>
<dbReference type="GO" id="GO:0003735">
    <property type="term" value="F:structural constituent of ribosome"/>
    <property type="evidence" value="ECO:0007669"/>
    <property type="project" value="InterPro"/>
</dbReference>
<dbReference type="GO" id="GO:0006412">
    <property type="term" value="P:translation"/>
    <property type="evidence" value="ECO:0007669"/>
    <property type="project" value="UniProtKB-UniRule"/>
</dbReference>
<dbReference type="Gene3D" id="1.20.5.640">
    <property type="entry name" value="Single helix bin"/>
    <property type="match status" value="1"/>
</dbReference>
<dbReference type="HAMAP" id="MF_00340">
    <property type="entry name" value="Ribosomal_bL32"/>
    <property type="match status" value="1"/>
</dbReference>
<dbReference type="InterPro" id="IPR002677">
    <property type="entry name" value="Ribosomal_bL32"/>
</dbReference>
<dbReference type="InterPro" id="IPR044957">
    <property type="entry name" value="Ribosomal_bL32_bact"/>
</dbReference>
<dbReference type="InterPro" id="IPR011332">
    <property type="entry name" value="Ribosomal_zn-bd"/>
</dbReference>
<dbReference type="NCBIfam" id="TIGR01031">
    <property type="entry name" value="rpmF_bact"/>
    <property type="match status" value="1"/>
</dbReference>
<dbReference type="PANTHER" id="PTHR35534">
    <property type="entry name" value="50S RIBOSOMAL PROTEIN L32"/>
    <property type="match status" value="1"/>
</dbReference>
<dbReference type="PANTHER" id="PTHR35534:SF1">
    <property type="entry name" value="LARGE RIBOSOMAL SUBUNIT PROTEIN BL32"/>
    <property type="match status" value="1"/>
</dbReference>
<dbReference type="Pfam" id="PF01783">
    <property type="entry name" value="Ribosomal_L32p"/>
    <property type="match status" value="1"/>
</dbReference>
<dbReference type="SUPFAM" id="SSF57829">
    <property type="entry name" value="Zn-binding ribosomal proteins"/>
    <property type="match status" value="1"/>
</dbReference>
<accession>A4YKR8</accession>
<reference key="1">
    <citation type="journal article" date="2007" name="Science">
        <title>Legumes symbioses: absence of nod genes in photosynthetic bradyrhizobia.</title>
        <authorList>
            <person name="Giraud E."/>
            <person name="Moulin L."/>
            <person name="Vallenet D."/>
            <person name="Barbe V."/>
            <person name="Cytryn E."/>
            <person name="Avarre J.-C."/>
            <person name="Jaubert M."/>
            <person name="Simon D."/>
            <person name="Cartieaux F."/>
            <person name="Prin Y."/>
            <person name="Bena G."/>
            <person name="Hannibal L."/>
            <person name="Fardoux J."/>
            <person name="Kojadinovic M."/>
            <person name="Vuillet L."/>
            <person name="Lajus A."/>
            <person name="Cruveiller S."/>
            <person name="Rouy Z."/>
            <person name="Mangenot S."/>
            <person name="Segurens B."/>
            <person name="Dossat C."/>
            <person name="Franck W.L."/>
            <person name="Chang W.-S."/>
            <person name="Saunders E."/>
            <person name="Bruce D."/>
            <person name="Richardson P."/>
            <person name="Normand P."/>
            <person name="Dreyfus B."/>
            <person name="Pignol D."/>
            <person name="Stacey G."/>
            <person name="Emerich D."/>
            <person name="Vermeglio A."/>
            <person name="Medigue C."/>
            <person name="Sadowsky M."/>
        </authorList>
    </citation>
    <scope>NUCLEOTIDE SEQUENCE [LARGE SCALE GENOMIC DNA]</scope>
    <source>
        <strain>ORS 278</strain>
    </source>
</reference>
<evidence type="ECO:0000255" key="1">
    <source>
        <dbReference type="HAMAP-Rule" id="MF_00340"/>
    </source>
</evidence>
<evidence type="ECO:0000256" key="2">
    <source>
        <dbReference type="SAM" id="MobiDB-lite"/>
    </source>
</evidence>
<evidence type="ECO:0000305" key="3"/>
<gene>
    <name evidence="1" type="primary">rpmF</name>
    <name type="ordered locus">BRADO0557</name>
</gene>
<feature type="chain" id="PRO_0000296432" description="Large ribosomal subunit protein bL32">
    <location>
        <begin position="1"/>
        <end position="60"/>
    </location>
</feature>
<feature type="region of interest" description="Disordered" evidence="2">
    <location>
        <begin position="1"/>
        <end position="60"/>
    </location>
</feature>
<feature type="compositionally biased region" description="Basic residues" evidence="2">
    <location>
        <begin position="1"/>
        <end position="16"/>
    </location>
</feature>
<feature type="compositionally biased region" description="Basic and acidic residues" evidence="2">
    <location>
        <begin position="17"/>
        <end position="44"/>
    </location>
</feature>
<sequence>MAVPRRKTSPSRRGMRRSADAIKKPTYVEDKDSGELRRPHHLDLKTGMYKGRQVLKKKDA</sequence>
<comment type="similarity">
    <text evidence="1">Belongs to the bacterial ribosomal protein bL32 family.</text>
</comment>